<gene>
    <name type="primary">MT-CYB</name>
    <name type="synonym">COB</name>
    <name type="synonym">CYTB</name>
    <name type="synonym">MTCYB</name>
</gene>
<name>CYB_GENJO</name>
<keyword id="KW-0249">Electron transport</keyword>
<keyword id="KW-0349">Heme</keyword>
<keyword id="KW-0408">Iron</keyword>
<keyword id="KW-0472">Membrane</keyword>
<keyword id="KW-0479">Metal-binding</keyword>
<keyword id="KW-0496">Mitochondrion</keyword>
<keyword id="KW-0999">Mitochondrion inner membrane</keyword>
<keyword id="KW-0679">Respiratory chain</keyword>
<keyword id="KW-0812">Transmembrane</keyword>
<keyword id="KW-1133">Transmembrane helix</keyword>
<keyword id="KW-0813">Transport</keyword>
<keyword id="KW-0830">Ubiquinone</keyword>
<comment type="function">
    <text evidence="2">Component of the ubiquinol-cytochrome c reductase complex (complex III or cytochrome b-c1 complex) that is part of the mitochondrial respiratory chain. The b-c1 complex mediates electron transfer from ubiquinol to cytochrome c. Contributes to the generation of a proton gradient across the mitochondrial membrane that is then used for ATP synthesis.</text>
</comment>
<comment type="cofactor">
    <cofactor evidence="2">
        <name>heme b</name>
        <dbReference type="ChEBI" id="CHEBI:60344"/>
    </cofactor>
    <text evidence="2">Binds 2 heme b groups non-covalently.</text>
</comment>
<comment type="subunit">
    <text evidence="2">The cytochrome bc1 complex contains 11 subunits: 3 respiratory subunits (MT-CYB, CYC1 and UQCRFS1), 2 core proteins (UQCRC1 and UQCRC2) and 6 low-molecular weight proteins (UQCRH/QCR6, UQCRB/QCR7, UQCRQ/QCR8, UQCR10/QCR9, UQCR11/QCR10 and a cleavage product of UQCRFS1). This cytochrome bc1 complex then forms a dimer.</text>
</comment>
<comment type="subcellular location">
    <subcellularLocation>
        <location evidence="2">Mitochondrion inner membrane</location>
        <topology evidence="2">Multi-pass membrane protein</topology>
    </subcellularLocation>
</comment>
<comment type="miscellaneous">
    <text evidence="1">Heme 1 (or BL or b562) is low-potential and absorbs at about 562 nm, and heme 2 (or BH or b566) is high-potential and absorbs at about 566 nm.</text>
</comment>
<comment type="similarity">
    <text evidence="3 4">Belongs to the cytochrome b family.</text>
</comment>
<comment type="caution">
    <text evidence="2">The full-length protein contains only eight transmembrane helices, not nine as predicted by bioinformatics tools.</text>
</comment>
<accession>Q6XBW5</accession>
<geneLocation type="mitochondrion"/>
<dbReference type="EMBL" id="AY241892">
    <property type="protein sequence ID" value="AAP73012.1"/>
    <property type="molecule type" value="Genomic_DNA"/>
</dbReference>
<dbReference type="EMBL" id="AF511051">
    <property type="protein sequence ID" value="AAQ08027.1"/>
    <property type="molecule type" value="Genomic_DNA"/>
</dbReference>
<dbReference type="SMR" id="Q6XBW5"/>
<dbReference type="GO" id="GO:0005743">
    <property type="term" value="C:mitochondrial inner membrane"/>
    <property type="evidence" value="ECO:0007669"/>
    <property type="project" value="UniProtKB-SubCell"/>
</dbReference>
<dbReference type="GO" id="GO:0045275">
    <property type="term" value="C:respiratory chain complex III"/>
    <property type="evidence" value="ECO:0007669"/>
    <property type="project" value="InterPro"/>
</dbReference>
<dbReference type="GO" id="GO:0046872">
    <property type="term" value="F:metal ion binding"/>
    <property type="evidence" value="ECO:0007669"/>
    <property type="project" value="UniProtKB-KW"/>
</dbReference>
<dbReference type="GO" id="GO:0008121">
    <property type="term" value="F:ubiquinol-cytochrome-c reductase activity"/>
    <property type="evidence" value="ECO:0007669"/>
    <property type="project" value="InterPro"/>
</dbReference>
<dbReference type="GO" id="GO:0006122">
    <property type="term" value="P:mitochondrial electron transport, ubiquinol to cytochrome c"/>
    <property type="evidence" value="ECO:0007669"/>
    <property type="project" value="TreeGrafter"/>
</dbReference>
<dbReference type="CDD" id="cd00290">
    <property type="entry name" value="cytochrome_b_C"/>
    <property type="match status" value="1"/>
</dbReference>
<dbReference type="CDD" id="cd00284">
    <property type="entry name" value="Cytochrome_b_N"/>
    <property type="match status" value="1"/>
</dbReference>
<dbReference type="FunFam" id="1.20.810.10:FF:000002">
    <property type="entry name" value="Cytochrome b"/>
    <property type="match status" value="1"/>
</dbReference>
<dbReference type="Gene3D" id="1.20.810.10">
    <property type="entry name" value="Cytochrome Bc1 Complex, Chain C"/>
    <property type="match status" value="1"/>
</dbReference>
<dbReference type="InterPro" id="IPR005798">
    <property type="entry name" value="Cyt_b/b6_C"/>
</dbReference>
<dbReference type="InterPro" id="IPR036150">
    <property type="entry name" value="Cyt_b/b6_C_sf"/>
</dbReference>
<dbReference type="InterPro" id="IPR005797">
    <property type="entry name" value="Cyt_b/b6_N"/>
</dbReference>
<dbReference type="InterPro" id="IPR027387">
    <property type="entry name" value="Cytb/b6-like_sf"/>
</dbReference>
<dbReference type="InterPro" id="IPR030689">
    <property type="entry name" value="Cytochrome_b"/>
</dbReference>
<dbReference type="InterPro" id="IPR048260">
    <property type="entry name" value="Cytochrome_b_C_euk/bac"/>
</dbReference>
<dbReference type="InterPro" id="IPR048259">
    <property type="entry name" value="Cytochrome_b_N_euk/bac"/>
</dbReference>
<dbReference type="InterPro" id="IPR016174">
    <property type="entry name" value="Di-haem_cyt_TM"/>
</dbReference>
<dbReference type="PANTHER" id="PTHR19271">
    <property type="entry name" value="CYTOCHROME B"/>
    <property type="match status" value="1"/>
</dbReference>
<dbReference type="PANTHER" id="PTHR19271:SF16">
    <property type="entry name" value="CYTOCHROME B"/>
    <property type="match status" value="1"/>
</dbReference>
<dbReference type="Pfam" id="PF00032">
    <property type="entry name" value="Cytochrom_B_C"/>
    <property type="match status" value="1"/>
</dbReference>
<dbReference type="Pfam" id="PF00033">
    <property type="entry name" value="Cytochrome_B"/>
    <property type="match status" value="1"/>
</dbReference>
<dbReference type="PIRSF" id="PIRSF038885">
    <property type="entry name" value="COB"/>
    <property type="match status" value="1"/>
</dbReference>
<dbReference type="SUPFAM" id="SSF81648">
    <property type="entry name" value="a domain/subunit of cytochrome bc1 complex (Ubiquinol-cytochrome c reductase)"/>
    <property type="match status" value="1"/>
</dbReference>
<dbReference type="SUPFAM" id="SSF81342">
    <property type="entry name" value="Transmembrane di-heme cytochromes"/>
    <property type="match status" value="1"/>
</dbReference>
<dbReference type="PROSITE" id="PS51003">
    <property type="entry name" value="CYTB_CTER"/>
    <property type="match status" value="1"/>
</dbReference>
<dbReference type="PROSITE" id="PS51002">
    <property type="entry name" value="CYTB_NTER"/>
    <property type="match status" value="1"/>
</dbReference>
<feature type="chain" id="PRO_0000254693" description="Cytochrome b">
    <location>
        <begin position="1"/>
        <end position="379"/>
    </location>
</feature>
<feature type="transmembrane region" description="Helical" evidence="2">
    <location>
        <begin position="33"/>
        <end position="53"/>
    </location>
</feature>
<feature type="transmembrane region" description="Helical" evidence="2">
    <location>
        <begin position="77"/>
        <end position="98"/>
    </location>
</feature>
<feature type="transmembrane region" description="Helical" evidence="2">
    <location>
        <begin position="113"/>
        <end position="133"/>
    </location>
</feature>
<feature type="transmembrane region" description="Helical" evidence="2">
    <location>
        <begin position="178"/>
        <end position="198"/>
    </location>
</feature>
<feature type="transmembrane region" description="Helical" evidence="2">
    <location>
        <begin position="226"/>
        <end position="246"/>
    </location>
</feature>
<feature type="transmembrane region" description="Helical" evidence="2">
    <location>
        <begin position="288"/>
        <end position="308"/>
    </location>
</feature>
<feature type="transmembrane region" description="Helical" evidence="2">
    <location>
        <begin position="320"/>
        <end position="340"/>
    </location>
</feature>
<feature type="transmembrane region" description="Helical" evidence="2">
    <location>
        <begin position="347"/>
        <end position="367"/>
    </location>
</feature>
<feature type="binding site" description="axial binding residue" evidence="2">
    <location>
        <position position="83"/>
    </location>
    <ligand>
        <name>heme b</name>
        <dbReference type="ChEBI" id="CHEBI:60344"/>
        <label>b562</label>
    </ligand>
    <ligandPart>
        <name>Fe</name>
        <dbReference type="ChEBI" id="CHEBI:18248"/>
    </ligandPart>
</feature>
<feature type="binding site" description="axial binding residue" evidence="2">
    <location>
        <position position="97"/>
    </location>
    <ligand>
        <name>heme b</name>
        <dbReference type="ChEBI" id="CHEBI:60344"/>
        <label>b566</label>
    </ligand>
    <ligandPart>
        <name>Fe</name>
        <dbReference type="ChEBI" id="CHEBI:18248"/>
    </ligandPart>
</feature>
<feature type="binding site" description="axial binding residue" evidence="2">
    <location>
        <position position="182"/>
    </location>
    <ligand>
        <name>heme b</name>
        <dbReference type="ChEBI" id="CHEBI:60344"/>
        <label>b562</label>
    </ligand>
    <ligandPart>
        <name>Fe</name>
        <dbReference type="ChEBI" id="CHEBI:18248"/>
    </ligandPart>
</feature>
<feature type="binding site" description="axial binding residue" evidence="2">
    <location>
        <position position="196"/>
    </location>
    <ligand>
        <name>heme b</name>
        <dbReference type="ChEBI" id="CHEBI:60344"/>
        <label>b566</label>
    </ligand>
    <ligandPart>
        <name>Fe</name>
        <dbReference type="ChEBI" id="CHEBI:18248"/>
    </ligandPart>
</feature>
<feature type="binding site" evidence="2">
    <location>
        <position position="201"/>
    </location>
    <ligand>
        <name>a ubiquinone</name>
        <dbReference type="ChEBI" id="CHEBI:16389"/>
    </ligand>
</feature>
<protein>
    <recommendedName>
        <fullName>Cytochrome b</fullName>
    </recommendedName>
    <alternativeName>
        <fullName>Complex III subunit 3</fullName>
    </alternativeName>
    <alternativeName>
        <fullName>Complex III subunit III</fullName>
    </alternativeName>
    <alternativeName>
        <fullName>Cytochrome b-c1 complex subunit 3</fullName>
    </alternativeName>
    <alternativeName>
        <fullName>Ubiquinol-cytochrome-c reductase complex cytochrome b subunit</fullName>
    </alternativeName>
</protein>
<organism>
    <name type="scientific">Genetta johnstoni</name>
    <name type="common">Johnston's genet</name>
    <dbReference type="NCBI Taxonomy" id="205594"/>
    <lineage>
        <taxon>Eukaryota</taxon>
        <taxon>Metazoa</taxon>
        <taxon>Chordata</taxon>
        <taxon>Craniata</taxon>
        <taxon>Vertebrata</taxon>
        <taxon>Euteleostomi</taxon>
        <taxon>Mammalia</taxon>
        <taxon>Eutheria</taxon>
        <taxon>Laurasiatheria</taxon>
        <taxon>Carnivora</taxon>
        <taxon>Feliformia</taxon>
        <taxon>Viverridae</taxon>
        <taxon>Viverrinae</taxon>
        <taxon>Genetta</taxon>
    </lineage>
</organism>
<reference key="1">
    <citation type="journal article" date="2004" name="Biol. J. Linn. Soc. Lond.">
        <title>Genets (Carnivora, Viverridae) in Africa: an evolutionary synthesis based on cytochrome b sequences and morphological characters.</title>
        <authorList>
            <person name="Gaubert P."/>
            <person name="Fernandes C.A."/>
            <person name="Bruford M.W."/>
            <person name="Veron G."/>
        </authorList>
    </citation>
    <scope>NUCLEOTIDE SEQUENCE [GENOMIC DNA]</scope>
</reference>
<reference key="2">
    <citation type="journal article" date="2004" name="Zool. Scr.">
        <title>First molecular evidence for reassessing phylogenetic affinities between genets (Genetta) and the enigmatic genet-like taxa Osbornictis, Poiana and Prionodon (Carnivora, Viverridae).</title>
        <authorList>
            <person name="Gaubert P."/>
            <person name="Tranier M."/>
            <person name="Delmas A.-S."/>
            <person name="Colyn M."/>
            <person name="Veron G."/>
        </authorList>
    </citation>
    <scope>NUCLEOTIDE SEQUENCE [GENOMIC DNA]</scope>
</reference>
<proteinExistence type="inferred from homology"/>
<evidence type="ECO:0000250" key="1"/>
<evidence type="ECO:0000250" key="2">
    <source>
        <dbReference type="UniProtKB" id="P00157"/>
    </source>
</evidence>
<evidence type="ECO:0000255" key="3">
    <source>
        <dbReference type="PROSITE-ProRule" id="PRU00967"/>
    </source>
</evidence>
<evidence type="ECO:0000255" key="4">
    <source>
        <dbReference type="PROSITE-ProRule" id="PRU00968"/>
    </source>
</evidence>
<sequence>MTDIRKSHPLAKIINESFIDLPAPSNISAWWNFGSLLGVCLIIQILTGLFLAMHYTSDTMTAFSSVTHICRDVNYGWIIRYMHANGASMFFICLFMHAGRGVYYGSYTFTETWNIGILLMFTVMATAFMGYVLPWGQMSFWGATVITNLLSAIPYIGTNLVEWIWGGFSVDKATLTRLFAFHFILPFIISALAAVHLLFLHETGSNNPSGMMSDSDKIPFHPYYTIKDILGILLLILVLMLLVLFSPDLLGDPDNYIPANPLNTPPHIKPEWYFLFAYAILRSIPNKLGGVLALVLSILILAIIPFLHTSKQRSMMFRPLSQCLFWLLVADLLTLTWIGGQPVEHPFITIGQLASILYFSIFLILMPVSGIIENRLLKW</sequence>